<accession>Q2T4B3</accession>
<dbReference type="EC" id="7.6.2.-" evidence="1"/>
<dbReference type="EMBL" id="CP000085">
    <property type="protein sequence ID" value="ABC34957.1"/>
    <property type="molecule type" value="Genomic_DNA"/>
</dbReference>
<dbReference type="RefSeq" id="WP_009897901.1">
    <property type="nucleotide sequence ID" value="NZ_CP008786.1"/>
</dbReference>
<dbReference type="SMR" id="Q2T4B3"/>
<dbReference type="GeneID" id="45119223"/>
<dbReference type="KEGG" id="bte:BTH_II1792"/>
<dbReference type="HOGENOM" id="CLU_000604_78_1_4"/>
<dbReference type="Proteomes" id="UP000001930">
    <property type="component" value="Chromosome II"/>
</dbReference>
<dbReference type="GO" id="GO:0005886">
    <property type="term" value="C:plasma membrane"/>
    <property type="evidence" value="ECO:0007669"/>
    <property type="project" value="UniProtKB-SubCell"/>
</dbReference>
<dbReference type="GO" id="GO:0005524">
    <property type="term" value="F:ATP binding"/>
    <property type="evidence" value="ECO:0007669"/>
    <property type="project" value="UniProtKB-KW"/>
</dbReference>
<dbReference type="GO" id="GO:0016887">
    <property type="term" value="F:ATP hydrolysis activity"/>
    <property type="evidence" value="ECO:0007669"/>
    <property type="project" value="InterPro"/>
</dbReference>
<dbReference type="GO" id="GO:0022857">
    <property type="term" value="F:transmembrane transporter activity"/>
    <property type="evidence" value="ECO:0007669"/>
    <property type="project" value="TreeGrafter"/>
</dbReference>
<dbReference type="GO" id="GO:0046677">
    <property type="term" value="P:response to antibiotic"/>
    <property type="evidence" value="ECO:0007669"/>
    <property type="project" value="UniProtKB-KW"/>
</dbReference>
<dbReference type="CDD" id="cd03255">
    <property type="entry name" value="ABC_MJ0796_LolCDE_FtsE"/>
    <property type="match status" value="1"/>
</dbReference>
<dbReference type="FunFam" id="3.40.50.300:FF:000032">
    <property type="entry name" value="Export ABC transporter ATP-binding protein"/>
    <property type="match status" value="1"/>
</dbReference>
<dbReference type="Gene3D" id="3.40.50.300">
    <property type="entry name" value="P-loop containing nucleotide triphosphate hydrolases"/>
    <property type="match status" value="1"/>
</dbReference>
<dbReference type="InterPro" id="IPR003593">
    <property type="entry name" value="AAA+_ATPase"/>
</dbReference>
<dbReference type="InterPro" id="IPR003838">
    <property type="entry name" value="ABC3_permease_C"/>
</dbReference>
<dbReference type="InterPro" id="IPR003439">
    <property type="entry name" value="ABC_transporter-like_ATP-bd"/>
</dbReference>
<dbReference type="InterPro" id="IPR017871">
    <property type="entry name" value="ABC_transporter-like_CS"/>
</dbReference>
<dbReference type="InterPro" id="IPR017911">
    <property type="entry name" value="MacB-like_ATP-bd"/>
</dbReference>
<dbReference type="InterPro" id="IPR025857">
    <property type="entry name" value="MacB_PCD"/>
</dbReference>
<dbReference type="InterPro" id="IPR050250">
    <property type="entry name" value="Macrolide_Exporter_MacB"/>
</dbReference>
<dbReference type="InterPro" id="IPR027417">
    <property type="entry name" value="P-loop_NTPase"/>
</dbReference>
<dbReference type="NCBIfam" id="NF007826">
    <property type="entry name" value="PRK10535.1"/>
    <property type="match status" value="1"/>
</dbReference>
<dbReference type="PANTHER" id="PTHR30572:SF7">
    <property type="entry name" value="MACROLIDE EXPORT ATP-BINDING_PERMEASE PROTEIN MACB"/>
    <property type="match status" value="1"/>
</dbReference>
<dbReference type="PANTHER" id="PTHR30572">
    <property type="entry name" value="MEMBRANE COMPONENT OF TRANSPORTER-RELATED"/>
    <property type="match status" value="1"/>
</dbReference>
<dbReference type="Pfam" id="PF00005">
    <property type="entry name" value="ABC_tran"/>
    <property type="match status" value="1"/>
</dbReference>
<dbReference type="Pfam" id="PF02687">
    <property type="entry name" value="FtsX"/>
    <property type="match status" value="1"/>
</dbReference>
<dbReference type="Pfam" id="PF12704">
    <property type="entry name" value="MacB_PCD"/>
    <property type="match status" value="1"/>
</dbReference>
<dbReference type="SMART" id="SM00382">
    <property type="entry name" value="AAA"/>
    <property type="match status" value="1"/>
</dbReference>
<dbReference type="SUPFAM" id="SSF52540">
    <property type="entry name" value="P-loop containing nucleoside triphosphate hydrolases"/>
    <property type="match status" value="1"/>
</dbReference>
<dbReference type="PROSITE" id="PS00211">
    <property type="entry name" value="ABC_TRANSPORTER_1"/>
    <property type="match status" value="1"/>
</dbReference>
<dbReference type="PROSITE" id="PS50893">
    <property type="entry name" value="ABC_TRANSPORTER_2"/>
    <property type="match status" value="1"/>
</dbReference>
<dbReference type="PROSITE" id="PS51267">
    <property type="entry name" value="MACB"/>
    <property type="match status" value="1"/>
</dbReference>
<feature type="chain" id="PRO_0000269932" description="Macrolide export ATP-binding/permease protein MacB">
    <location>
        <begin position="1"/>
        <end position="653"/>
    </location>
</feature>
<feature type="transmembrane region" description="Helical" evidence="1">
    <location>
        <begin position="278"/>
        <end position="298"/>
    </location>
</feature>
<feature type="transmembrane region" description="Helical" evidence="1">
    <location>
        <begin position="526"/>
        <end position="546"/>
    </location>
</feature>
<feature type="transmembrane region" description="Helical" evidence="1">
    <location>
        <begin position="587"/>
        <end position="607"/>
    </location>
</feature>
<feature type="transmembrane region" description="Helical" evidence="1">
    <location>
        <begin position="616"/>
        <end position="636"/>
    </location>
</feature>
<feature type="domain" description="ABC transporter" evidence="1">
    <location>
        <begin position="6"/>
        <end position="244"/>
    </location>
</feature>
<feature type="binding site" evidence="1">
    <location>
        <begin position="42"/>
        <end position="49"/>
    </location>
    <ligand>
        <name>ATP</name>
        <dbReference type="ChEBI" id="CHEBI:30616"/>
    </ligand>
</feature>
<name>MACB_BURTA</name>
<proteinExistence type="inferred from homology"/>
<comment type="function">
    <text evidence="1">Non-canonical ABC transporter that contains transmembrane domains (TMD), which form a pore in the inner membrane, and an ATP-binding domain (NBD), which is responsible for energy generation. Confers resistance against macrolides.</text>
</comment>
<comment type="subunit">
    <text evidence="1">Homodimer.</text>
</comment>
<comment type="subcellular location">
    <subcellularLocation>
        <location evidence="1">Cell inner membrane</location>
        <topology evidence="1">Multi-pass membrane protein</topology>
    </subcellularLocation>
</comment>
<comment type="similarity">
    <text evidence="1">Belongs to the ABC transporter superfamily. Macrolide exporter (TC 3.A.1.122) family.</text>
</comment>
<gene>
    <name evidence="1" type="primary">macB</name>
    <name type="ordered locus">BTH_II1792</name>
</gene>
<keyword id="KW-0046">Antibiotic resistance</keyword>
<keyword id="KW-0067">ATP-binding</keyword>
<keyword id="KW-0997">Cell inner membrane</keyword>
<keyword id="KW-1003">Cell membrane</keyword>
<keyword id="KW-0472">Membrane</keyword>
<keyword id="KW-0547">Nucleotide-binding</keyword>
<keyword id="KW-1278">Translocase</keyword>
<keyword id="KW-0812">Transmembrane</keyword>
<keyword id="KW-1133">Transmembrane helix</keyword>
<keyword id="KW-0813">Transport</keyword>
<organism>
    <name type="scientific">Burkholderia thailandensis (strain ATCC 700388 / DSM 13276 / CCUG 48851 / CIP 106301 / E264)</name>
    <dbReference type="NCBI Taxonomy" id="271848"/>
    <lineage>
        <taxon>Bacteria</taxon>
        <taxon>Pseudomonadati</taxon>
        <taxon>Pseudomonadota</taxon>
        <taxon>Betaproteobacteria</taxon>
        <taxon>Burkholderiales</taxon>
        <taxon>Burkholderiaceae</taxon>
        <taxon>Burkholderia</taxon>
        <taxon>pseudomallei group</taxon>
    </lineage>
</organism>
<reference key="1">
    <citation type="journal article" date="2005" name="BMC Genomics">
        <title>Bacterial genome adaptation to niches: divergence of the potential virulence genes in three Burkholderia species of different survival strategies.</title>
        <authorList>
            <person name="Kim H.S."/>
            <person name="Schell M.A."/>
            <person name="Yu Y."/>
            <person name="Ulrich R.L."/>
            <person name="Sarria S.H."/>
            <person name="Nierman W.C."/>
            <person name="DeShazer D."/>
        </authorList>
    </citation>
    <scope>NUCLEOTIDE SEQUENCE [LARGE SCALE GENOMIC DNA]</scope>
    <source>
        <strain>ATCC 700388 / DSM 13276 / CCUG 48851 / CIP 106301 / E264</strain>
    </source>
</reference>
<sequence length="653" mass="70211">MAEPLLQLTRVTRRFPAGDKDVVVLDDVSLSIDAGEIVAIVGASGSGKSTLMNILGCLDHPSSGSYRVGARETSELESDELARLRREHFGFIFQRYHLLPHLSAAENVEMPAVYAGSAQAQRRERALMLLARLGLSDRAGHRPSQLSGGQQQRVSIARALMNGGEVILADEPTGALDSKSGHDVIRVLRELNALGHTVIIVTHDENVAAHARRIIEISDGRIVGDRLNPHADGADAASGASGDAGPQRARRLSAGVGRFAEAFRMAWIALVSHRLRTLLTMLGIIIGITSVVSIVAIGEGAKRYMLDEIGSIGTNTINVYPGADWGDSRADAIQTLVPADAAALADQIYVDSATPETSRSLLLRYRNIDVNALVSGVGERFFQVRGMKMAQGIAFGPDEVRRQAQVAVIDENTRRKLFGANPNPLGEVILIDNLPCIVIGVTAAKKSAFGDTKNLNVWVPYTTASGRLFGQRHLDSITVRVRDGQPSAAAEQSLTKLMLQRHGRKDFFTYNMDSVVKTVEKTGQSLTLLLSLIAVISLVVGGIGVMNIMLVSVTERTREIGIRMAVGARQADIMQQFLVEAVTVCLMGGAIGIVLSLGMSFVFSLFVDQWKMVFSAGSIVSAFLCSTLIGVVFGFMPARNASRLDPIDALARD</sequence>
<protein>
    <recommendedName>
        <fullName evidence="1">Macrolide export ATP-binding/permease protein MacB</fullName>
        <ecNumber evidence="1">7.6.2.-</ecNumber>
    </recommendedName>
</protein>
<evidence type="ECO:0000255" key="1">
    <source>
        <dbReference type="HAMAP-Rule" id="MF_01720"/>
    </source>
</evidence>